<dbReference type="EC" id="4.2.1.59" evidence="1"/>
<dbReference type="EMBL" id="CP000240">
    <property type="protein sequence ID" value="ABD03710.1"/>
    <property type="molecule type" value="Genomic_DNA"/>
</dbReference>
<dbReference type="RefSeq" id="WP_011434327.1">
    <property type="nucleotide sequence ID" value="NC_007776.1"/>
</dbReference>
<dbReference type="SMR" id="Q2JI59"/>
<dbReference type="STRING" id="321332.CYB_2786"/>
<dbReference type="KEGG" id="cyb:CYB_2786"/>
<dbReference type="eggNOG" id="COG0764">
    <property type="taxonomic scope" value="Bacteria"/>
</dbReference>
<dbReference type="HOGENOM" id="CLU_078912_3_0_3"/>
<dbReference type="OrthoDB" id="9772788at2"/>
<dbReference type="Proteomes" id="UP000001938">
    <property type="component" value="Chromosome"/>
</dbReference>
<dbReference type="GO" id="GO:0005737">
    <property type="term" value="C:cytoplasm"/>
    <property type="evidence" value="ECO:0007669"/>
    <property type="project" value="UniProtKB-SubCell"/>
</dbReference>
<dbReference type="GO" id="GO:0016020">
    <property type="term" value="C:membrane"/>
    <property type="evidence" value="ECO:0007669"/>
    <property type="project" value="GOC"/>
</dbReference>
<dbReference type="GO" id="GO:0019171">
    <property type="term" value="F:(3R)-hydroxyacyl-[acyl-carrier-protein] dehydratase activity"/>
    <property type="evidence" value="ECO:0007669"/>
    <property type="project" value="UniProtKB-EC"/>
</dbReference>
<dbReference type="GO" id="GO:0006633">
    <property type="term" value="P:fatty acid biosynthetic process"/>
    <property type="evidence" value="ECO:0007669"/>
    <property type="project" value="UniProtKB-UniRule"/>
</dbReference>
<dbReference type="GO" id="GO:0009245">
    <property type="term" value="P:lipid A biosynthetic process"/>
    <property type="evidence" value="ECO:0007669"/>
    <property type="project" value="UniProtKB-UniRule"/>
</dbReference>
<dbReference type="CDD" id="cd01288">
    <property type="entry name" value="FabZ"/>
    <property type="match status" value="1"/>
</dbReference>
<dbReference type="FunFam" id="3.10.129.10:FF:000001">
    <property type="entry name" value="3-hydroxyacyl-[acyl-carrier-protein] dehydratase FabZ"/>
    <property type="match status" value="1"/>
</dbReference>
<dbReference type="Gene3D" id="3.10.129.10">
    <property type="entry name" value="Hotdog Thioesterase"/>
    <property type="match status" value="1"/>
</dbReference>
<dbReference type="HAMAP" id="MF_00406">
    <property type="entry name" value="FabZ"/>
    <property type="match status" value="1"/>
</dbReference>
<dbReference type="InterPro" id="IPR013114">
    <property type="entry name" value="FabA_FabZ"/>
</dbReference>
<dbReference type="InterPro" id="IPR010084">
    <property type="entry name" value="FabZ"/>
</dbReference>
<dbReference type="InterPro" id="IPR029069">
    <property type="entry name" value="HotDog_dom_sf"/>
</dbReference>
<dbReference type="NCBIfam" id="TIGR01750">
    <property type="entry name" value="fabZ"/>
    <property type="match status" value="1"/>
</dbReference>
<dbReference type="NCBIfam" id="NF000582">
    <property type="entry name" value="PRK00006.1"/>
    <property type="match status" value="1"/>
</dbReference>
<dbReference type="PANTHER" id="PTHR30272">
    <property type="entry name" value="3-HYDROXYACYL-[ACYL-CARRIER-PROTEIN] DEHYDRATASE"/>
    <property type="match status" value="1"/>
</dbReference>
<dbReference type="PANTHER" id="PTHR30272:SF1">
    <property type="entry name" value="3-HYDROXYACYL-[ACYL-CARRIER-PROTEIN] DEHYDRATASE"/>
    <property type="match status" value="1"/>
</dbReference>
<dbReference type="Pfam" id="PF07977">
    <property type="entry name" value="FabA"/>
    <property type="match status" value="1"/>
</dbReference>
<dbReference type="SUPFAM" id="SSF54637">
    <property type="entry name" value="Thioesterase/thiol ester dehydrase-isomerase"/>
    <property type="match status" value="1"/>
</dbReference>
<comment type="function">
    <text evidence="1">Involved in unsaturated fatty acids biosynthesis. Catalyzes the dehydration of short chain beta-hydroxyacyl-ACPs and long chain saturated and unsaturated beta-hydroxyacyl-ACPs.</text>
</comment>
<comment type="catalytic activity">
    <reaction evidence="1">
        <text>a (3R)-hydroxyacyl-[ACP] = a (2E)-enoyl-[ACP] + H2O</text>
        <dbReference type="Rhea" id="RHEA:13097"/>
        <dbReference type="Rhea" id="RHEA-COMP:9925"/>
        <dbReference type="Rhea" id="RHEA-COMP:9945"/>
        <dbReference type="ChEBI" id="CHEBI:15377"/>
        <dbReference type="ChEBI" id="CHEBI:78784"/>
        <dbReference type="ChEBI" id="CHEBI:78827"/>
        <dbReference type="EC" id="4.2.1.59"/>
    </reaction>
</comment>
<comment type="subcellular location">
    <subcellularLocation>
        <location evidence="1">Cytoplasm</location>
    </subcellularLocation>
</comment>
<comment type="similarity">
    <text evidence="1">Belongs to the thioester dehydratase family. FabZ subfamily.</text>
</comment>
<reference key="1">
    <citation type="journal article" date="2007" name="ISME J.">
        <title>Population level functional diversity in a microbial community revealed by comparative genomic and metagenomic analyses.</title>
        <authorList>
            <person name="Bhaya D."/>
            <person name="Grossman A.R."/>
            <person name="Steunou A.-S."/>
            <person name="Khuri N."/>
            <person name="Cohan F.M."/>
            <person name="Hamamura N."/>
            <person name="Melendrez M.C."/>
            <person name="Bateson M.M."/>
            <person name="Ward D.M."/>
            <person name="Heidelberg J.F."/>
        </authorList>
    </citation>
    <scope>NUCLEOTIDE SEQUENCE [LARGE SCALE GENOMIC DNA]</scope>
    <source>
        <strain>JA-2-3B'a(2-13)</strain>
    </source>
</reference>
<organism>
    <name type="scientific">Synechococcus sp. (strain JA-2-3B'a(2-13))</name>
    <name type="common">Cyanobacteria bacterium Yellowstone B-Prime</name>
    <dbReference type="NCBI Taxonomy" id="321332"/>
    <lineage>
        <taxon>Bacteria</taxon>
        <taxon>Bacillati</taxon>
        <taxon>Cyanobacteriota</taxon>
        <taxon>Cyanophyceae</taxon>
        <taxon>Synechococcales</taxon>
        <taxon>Synechococcaceae</taxon>
        <taxon>Synechococcus</taxon>
    </lineage>
</organism>
<name>FABZ_SYNJB</name>
<gene>
    <name evidence="1" type="primary">fabZ</name>
    <name type="ordered locus">CYB_2786</name>
</gene>
<keyword id="KW-0963">Cytoplasm</keyword>
<keyword id="KW-0441">Lipid A biosynthesis</keyword>
<keyword id="KW-0444">Lipid biosynthesis</keyword>
<keyword id="KW-0443">Lipid metabolism</keyword>
<keyword id="KW-0456">Lyase</keyword>
<keyword id="KW-1185">Reference proteome</keyword>
<protein>
    <recommendedName>
        <fullName evidence="1">3-hydroxyacyl-[acyl-carrier-protein] dehydratase FabZ</fullName>
        <ecNumber evidence="1">4.2.1.59</ecNumber>
    </recommendedName>
    <alternativeName>
        <fullName evidence="1">(3R)-hydroxymyristoyl-[acyl-carrier-protein] dehydratase</fullName>
        <shortName evidence="1">(3R)-hydroxymyristoyl-ACP dehydrase</shortName>
    </alternativeName>
    <alternativeName>
        <fullName evidence="1">Beta-hydroxyacyl-ACP dehydratase</fullName>
    </alternativeName>
</protein>
<feature type="chain" id="PRO_0000242905" description="3-hydroxyacyl-[acyl-carrier-protein] dehydratase FabZ">
    <location>
        <begin position="1"/>
        <end position="166"/>
    </location>
</feature>
<feature type="active site" evidence="1">
    <location>
        <position position="72"/>
    </location>
</feature>
<accession>Q2JI59</accession>
<proteinExistence type="inferred from homology"/>
<sequence length="166" mass="18145">MSSDVSPPPLLSAEAAAQLATAPPVFTTEQILEILPHRYPFLLVDRVVEYQPGQRAVGLKNVTFNEPFFQGHFPNRPIMPGVLIVEAMAQIGGIVLTKLPDVAGRLALFAGIDGVRFRRPVLPGDQLLLSADLLTIRQRRIGKMFCRAQVGGQLVTEGELMFSLVD</sequence>
<evidence type="ECO:0000255" key="1">
    <source>
        <dbReference type="HAMAP-Rule" id="MF_00406"/>
    </source>
</evidence>